<evidence type="ECO:0000255" key="1"/>
<evidence type="ECO:0000269" key="2">
    <source>
    </source>
</evidence>
<evidence type="ECO:0000269" key="3">
    <source>
    </source>
</evidence>
<evidence type="ECO:0000303" key="4">
    <source>
    </source>
</evidence>
<evidence type="ECO:0000303" key="5">
    <source>
    </source>
</evidence>
<evidence type="ECO:0000305" key="6"/>
<dbReference type="EMBL" id="D85613">
    <property type="status" value="NOT_ANNOTATED_CDS"/>
    <property type="molecule type" value="Genomic_DNA"/>
</dbReference>
<dbReference type="EMBL" id="U73857">
    <property type="protein sequence ID" value="AAB18077.1"/>
    <property type="status" value="ALT_INIT"/>
    <property type="molecule type" value="Genomic_DNA"/>
</dbReference>
<dbReference type="EMBL" id="U00096">
    <property type="protein sequence ID" value="AAC73456.2"/>
    <property type="molecule type" value="Genomic_DNA"/>
</dbReference>
<dbReference type="EMBL" id="AP009048">
    <property type="protein sequence ID" value="BAE76135.1"/>
    <property type="molecule type" value="Genomic_DNA"/>
</dbReference>
<dbReference type="EMBL" id="X97543">
    <property type="protein sequence ID" value="CAA66145.1"/>
    <property type="molecule type" value="Genomic_DNA"/>
</dbReference>
<dbReference type="PIR" id="A64763">
    <property type="entry name" value="A64763"/>
</dbReference>
<dbReference type="RefSeq" id="NP_414887.2">
    <property type="nucleotide sequence ID" value="NC_000913.3"/>
</dbReference>
<dbReference type="RefSeq" id="WP_000107627.1">
    <property type="nucleotide sequence ID" value="NZ_SSZK01000009.1"/>
</dbReference>
<dbReference type="SMR" id="P77589"/>
<dbReference type="BioGRID" id="4261625">
    <property type="interactions" value="23"/>
</dbReference>
<dbReference type="FunCoup" id="P77589">
    <property type="interactions" value="152"/>
</dbReference>
<dbReference type="STRING" id="511145.b0353"/>
<dbReference type="TCDB" id="2.A.1.15.2">
    <property type="family name" value="the major facilitator superfamily (mfs)"/>
</dbReference>
<dbReference type="PaxDb" id="511145-b0353"/>
<dbReference type="EnsemblBacteria" id="AAC73456">
    <property type="protein sequence ID" value="AAC73456"/>
    <property type="gene ID" value="b0353"/>
</dbReference>
<dbReference type="GeneID" id="944997"/>
<dbReference type="KEGG" id="ecj:JW5046"/>
<dbReference type="KEGG" id="eco:b0353"/>
<dbReference type="KEGG" id="ecoc:C3026_01740"/>
<dbReference type="KEGG" id="ecoc:C3026_24900"/>
<dbReference type="PATRIC" id="fig|1411691.4.peg.1925"/>
<dbReference type="EchoBASE" id="EB3078"/>
<dbReference type="eggNOG" id="COG2814">
    <property type="taxonomic scope" value="Bacteria"/>
</dbReference>
<dbReference type="HOGENOM" id="CLU_001265_46_4_6"/>
<dbReference type="InParanoid" id="P77589"/>
<dbReference type="OMA" id="WVAPLCW"/>
<dbReference type="OrthoDB" id="7066727at2"/>
<dbReference type="PhylomeDB" id="P77589"/>
<dbReference type="BioCyc" id="EcoCyc:MHPT-MONOMER"/>
<dbReference type="BioCyc" id="MetaCyc:MHPT-MONOMER"/>
<dbReference type="PRO" id="PR:P77589"/>
<dbReference type="Proteomes" id="UP000000625">
    <property type="component" value="Chromosome"/>
</dbReference>
<dbReference type="GO" id="GO:0016020">
    <property type="term" value="C:membrane"/>
    <property type="evidence" value="ECO:0000318"/>
    <property type="project" value="GO_Central"/>
</dbReference>
<dbReference type="GO" id="GO:0005886">
    <property type="term" value="C:plasma membrane"/>
    <property type="evidence" value="ECO:0000314"/>
    <property type="project" value="EcoCyc"/>
</dbReference>
<dbReference type="GO" id="GO:0015540">
    <property type="term" value="F:3-hydroxyphenyl propionate:proton symporter activity"/>
    <property type="evidence" value="ECO:0000269"/>
    <property type="project" value="EcoCyc"/>
</dbReference>
<dbReference type="GO" id="GO:0042920">
    <property type="term" value="P:3-hydroxyphenylpropionic acid transmembrane transport"/>
    <property type="evidence" value="ECO:0000269"/>
    <property type="project" value="EcoCyc"/>
</dbReference>
<dbReference type="CDD" id="cd17365">
    <property type="entry name" value="MFS_PcaK_like"/>
    <property type="match status" value="1"/>
</dbReference>
<dbReference type="FunFam" id="1.20.1250.20:FF:000376">
    <property type="entry name" value="3-(3-hydroxy-phenyl)propionate transporter MhpT"/>
    <property type="match status" value="1"/>
</dbReference>
<dbReference type="Gene3D" id="1.20.1250.20">
    <property type="entry name" value="MFS general substrate transporter like domains"/>
    <property type="match status" value="2"/>
</dbReference>
<dbReference type="InterPro" id="IPR011701">
    <property type="entry name" value="MFS"/>
</dbReference>
<dbReference type="InterPro" id="IPR020846">
    <property type="entry name" value="MFS_dom"/>
</dbReference>
<dbReference type="InterPro" id="IPR036259">
    <property type="entry name" value="MFS_trans_sf"/>
</dbReference>
<dbReference type="InterPro" id="IPR005829">
    <property type="entry name" value="Sugar_transporter_CS"/>
</dbReference>
<dbReference type="NCBIfam" id="NF008586">
    <property type="entry name" value="PRK11551.1"/>
    <property type="match status" value="1"/>
</dbReference>
<dbReference type="PANTHER" id="PTHR23508">
    <property type="entry name" value="CARBOXYLIC ACID TRANSPORTER PROTEIN HOMOLOG"/>
    <property type="match status" value="1"/>
</dbReference>
<dbReference type="PANTHER" id="PTHR23508:SF10">
    <property type="entry name" value="CARBOXYLIC ACID TRANSPORTER PROTEIN HOMOLOG"/>
    <property type="match status" value="1"/>
</dbReference>
<dbReference type="Pfam" id="PF07690">
    <property type="entry name" value="MFS_1"/>
    <property type="match status" value="1"/>
</dbReference>
<dbReference type="SUPFAM" id="SSF103473">
    <property type="entry name" value="MFS general substrate transporter"/>
    <property type="match status" value="1"/>
</dbReference>
<dbReference type="PROSITE" id="PS50850">
    <property type="entry name" value="MFS"/>
    <property type="match status" value="1"/>
</dbReference>
<keyword id="KW-0997">Cell inner membrane</keyword>
<keyword id="KW-1003">Cell membrane</keyword>
<keyword id="KW-0472">Membrane</keyword>
<keyword id="KW-1185">Reference proteome</keyword>
<keyword id="KW-0769">Symport</keyword>
<keyword id="KW-0812">Transmembrane</keyword>
<keyword id="KW-1133">Transmembrane helix</keyword>
<keyword id="KW-0813">Transport</keyword>
<reference key="1">
    <citation type="submission" date="1996-05" db="EMBL/GenBank/DDBJ databases">
        <authorList>
            <person name="Nashimoto H."/>
            <person name="Saito N."/>
        </authorList>
    </citation>
    <scope>NUCLEOTIDE SEQUENCE [GENOMIC DNA]</scope>
    <source>
        <strain>K12</strain>
    </source>
</reference>
<reference key="2">
    <citation type="submission" date="1997-01" db="EMBL/GenBank/DDBJ databases">
        <title>Sequence of minutes 4-25 of Escherichia coli.</title>
        <authorList>
            <person name="Chung E."/>
            <person name="Allen E."/>
            <person name="Araujo R."/>
            <person name="Aparicio A.M."/>
            <person name="Davis K."/>
            <person name="Duncan M."/>
            <person name="Federspiel N."/>
            <person name="Hyman R."/>
            <person name="Kalman S."/>
            <person name="Komp C."/>
            <person name="Kurdi O."/>
            <person name="Lew H."/>
            <person name="Lin D."/>
            <person name="Namath A."/>
            <person name="Oefner P."/>
            <person name="Roberts D."/>
            <person name="Schramm S."/>
            <person name="Davis R.W."/>
        </authorList>
    </citation>
    <scope>NUCLEOTIDE SEQUENCE [LARGE SCALE GENOMIC DNA]</scope>
    <source>
        <strain>K12 / MG1655 / ATCC 47076</strain>
    </source>
</reference>
<reference key="3">
    <citation type="journal article" date="1997" name="Science">
        <title>The complete genome sequence of Escherichia coli K-12.</title>
        <authorList>
            <person name="Blattner F.R."/>
            <person name="Plunkett G. III"/>
            <person name="Bloch C.A."/>
            <person name="Perna N.T."/>
            <person name="Burland V."/>
            <person name="Riley M."/>
            <person name="Collado-Vides J."/>
            <person name="Glasner J.D."/>
            <person name="Rode C.K."/>
            <person name="Mayhew G.F."/>
            <person name="Gregor J."/>
            <person name="Davis N.W."/>
            <person name="Kirkpatrick H.A."/>
            <person name="Goeden M.A."/>
            <person name="Rose D.J."/>
            <person name="Mau B."/>
            <person name="Shao Y."/>
        </authorList>
    </citation>
    <scope>NUCLEOTIDE SEQUENCE [LARGE SCALE GENOMIC DNA]</scope>
    <source>
        <strain>K12 / MG1655 / ATCC 47076</strain>
    </source>
</reference>
<reference key="4">
    <citation type="journal article" date="2006" name="Mol. Syst. Biol.">
        <title>Highly accurate genome sequences of Escherichia coli K-12 strains MG1655 and W3110.</title>
        <authorList>
            <person name="Hayashi K."/>
            <person name="Morooka N."/>
            <person name="Yamamoto Y."/>
            <person name="Fujita K."/>
            <person name="Isono K."/>
            <person name="Choi S."/>
            <person name="Ohtsubo E."/>
            <person name="Baba T."/>
            <person name="Wanner B.L."/>
            <person name="Mori H."/>
            <person name="Horiuchi T."/>
        </authorList>
    </citation>
    <scope>NUCLEOTIDE SEQUENCE [LARGE SCALE GENOMIC DNA]</scope>
    <source>
        <strain>K12 / W3110 / ATCC 27325 / DSM 5911</strain>
    </source>
</reference>
<reference key="5">
    <citation type="journal article" date="1997" name="J. Bacteriol.">
        <title>Genetic characterization and expression in heterologous hosts of the 3-(3-hydroxyphenyl)propionate catabolic pathway of Escherichia coli K-12.</title>
        <authorList>
            <person name="Ferrandez A."/>
            <person name="Garcia J.L."/>
            <person name="Diaz E."/>
        </authorList>
    </citation>
    <scope>NUCLEOTIDE SEQUENCE [GENOMIC DNA] OF 83-330</scope>
    <scope>PROBABLE FUNCTION</scope>
    <source>
        <strain>K12 / CS520</strain>
    </source>
</reference>
<reference key="6">
    <citation type="journal article" date="2005" name="Science">
        <title>Global topology analysis of the Escherichia coli inner membrane proteome.</title>
        <authorList>
            <person name="Daley D.O."/>
            <person name="Rapp M."/>
            <person name="Granseth E."/>
            <person name="Melen K."/>
            <person name="Drew D."/>
            <person name="von Heijne G."/>
        </authorList>
    </citation>
    <scope>SUBCELLULAR LOCATION</scope>
    <source>
        <strain>K12 / MG1655 / ATCC 47076</strain>
    </source>
</reference>
<reference key="7">
    <citation type="journal article" date="2013" name="Appl. Environ. Microbiol.">
        <title>mhpT encodes an active transporter involved in 3-(3-hydroxyphenyl)propionate catabolism by Escherichia coli K-12.</title>
        <authorList>
            <person name="Xu Y."/>
            <person name="Chen B."/>
            <person name="Chao H."/>
            <person name="Zhou N.Y."/>
        </authorList>
    </citation>
    <scope>FUNCTION</scope>
    <scope>TRANSPORTER ACTIVITY</scope>
    <scope>ACTIVITY REGULATION</scope>
    <scope>SUBCELLULAR LOCATION</scope>
    <scope>INDUCTION</scope>
    <scope>DISRUPTION PHENOTYPE</scope>
    <scope>MUTAGENESIS OF GLU-27; ASP-75; ALA-272 AND LYS-276</scope>
    <source>
        <strain>K12 / W3110 / ATCC 27325 / DSM 5911</strain>
    </source>
</reference>
<protein>
    <recommendedName>
        <fullName evidence="4">3-(3-hydroxy-phenyl)propionate transporter</fullName>
        <shortName evidence="4">3HPP transporter</shortName>
    </recommendedName>
    <alternativeName>
        <fullName evidence="6">3-(3-hydroxy-phenyl)propionate:H(+) symporter</fullName>
        <shortName evidence="6">3HPP:H(+) symporter</shortName>
    </alternativeName>
</protein>
<name>MHPT_ECOLI</name>
<sequence>MSTRTPSSSSSRLMLTIGLCFLVALMEGLDLQAAGIAAGGIAQAFALDKMQMGWIFSAGILGLLPGALVGGMLADRYGRKRILIGSVALFGLFSLATAIAWDFPSLVFARLMTGVGLGAALPNLIALTSEAAGPRFRGTAVSLMYCGVPIGAALAATLGFAGANLAWQTVFWVGGVVPLILVPLLMRWLPESAVFAGEKQSAPPLRALFAPETATATLLLWLCYFFTLLVVYMLINWLPLLLVEQGFQPSQAAGVMFALQMGAASGTLMLGALMDKLRPVTMSLLIYSGMLASLLALGTVSSFNGMLLAGFVAGLFATGGQSVLYALAPLFYSSQIRATGVGTAVAVGRLGAMSGPLLAGKMLALGTGTVGVMAASAPGILVAGLAVFILMSRRSRIQPCADA</sequence>
<accession>P77589</accession>
<accession>P77037</accession>
<accession>Q2MC71</accession>
<organism>
    <name type="scientific">Escherichia coli (strain K12)</name>
    <dbReference type="NCBI Taxonomy" id="83333"/>
    <lineage>
        <taxon>Bacteria</taxon>
        <taxon>Pseudomonadati</taxon>
        <taxon>Pseudomonadota</taxon>
        <taxon>Gammaproteobacteria</taxon>
        <taxon>Enterobacterales</taxon>
        <taxon>Enterobacteriaceae</taxon>
        <taxon>Escherichia</taxon>
    </lineage>
</organism>
<feature type="chain" id="PRO_0000050308" description="3-(3-hydroxy-phenyl)propionate transporter">
    <location>
        <begin position="1"/>
        <end position="403"/>
    </location>
</feature>
<feature type="topological domain" description="Cytoplasmic" evidence="1">
    <location>
        <begin position="1"/>
        <end position="16"/>
    </location>
</feature>
<feature type="transmembrane region" description="Helical; Name=1" evidence="1">
    <location>
        <begin position="17"/>
        <end position="37"/>
    </location>
</feature>
<feature type="topological domain" description="Periplasmic" evidence="1">
    <location>
        <begin position="38"/>
        <end position="53"/>
    </location>
</feature>
<feature type="transmembrane region" description="Helical; Name=2" evidence="1">
    <location>
        <begin position="54"/>
        <end position="74"/>
    </location>
</feature>
<feature type="topological domain" description="Cytoplasmic" evidence="1">
    <location>
        <begin position="75"/>
        <end position="81"/>
    </location>
</feature>
<feature type="transmembrane region" description="Helical; Name=3" evidence="1">
    <location>
        <begin position="82"/>
        <end position="102"/>
    </location>
</feature>
<feature type="topological domain" description="Periplasmic" evidence="1">
    <location>
        <begin position="103"/>
        <end position="105"/>
    </location>
</feature>
<feature type="transmembrane region" description="Helical; Name=4" evidence="1">
    <location>
        <begin position="106"/>
        <end position="126"/>
    </location>
</feature>
<feature type="topological domain" description="Cytoplasmic" evidence="1">
    <location>
        <begin position="127"/>
        <end position="142"/>
    </location>
</feature>
<feature type="transmembrane region" description="Helical; Name=5" evidence="1">
    <location>
        <begin position="143"/>
        <end position="163"/>
    </location>
</feature>
<feature type="topological domain" description="Periplasmic" evidence="1">
    <location>
        <position position="164"/>
    </location>
</feature>
<feature type="transmembrane region" description="Helical; Name=6" evidence="1">
    <location>
        <begin position="165"/>
        <end position="185"/>
    </location>
</feature>
<feature type="topological domain" description="Cytoplasmic" evidence="1">
    <location>
        <begin position="186"/>
        <end position="217"/>
    </location>
</feature>
<feature type="transmembrane region" description="Helical; Name=7" evidence="1">
    <location>
        <begin position="218"/>
        <end position="238"/>
    </location>
</feature>
<feature type="topological domain" description="Periplasmic" evidence="1">
    <location>
        <begin position="239"/>
        <end position="253"/>
    </location>
</feature>
<feature type="transmembrane region" description="Helical; Name=8" evidence="1">
    <location>
        <begin position="254"/>
        <end position="274"/>
    </location>
</feature>
<feature type="topological domain" description="Cytoplasmic" evidence="1">
    <location>
        <begin position="275"/>
        <end position="279"/>
    </location>
</feature>
<feature type="transmembrane region" description="Helical; Name=9" evidence="1">
    <location>
        <begin position="280"/>
        <end position="300"/>
    </location>
</feature>
<feature type="topological domain" description="Periplasmic" evidence="1">
    <location>
        <begin position="301"/>
        <end position="306"/>
    </location>
</feature>
<feature type="transmembrane region" description="Helical; Name=10" evidence="1">
    <location>
        <begin position="307"/>
        <end position="327"/>
    </location>
</feature>
<feature type="topological domain" description="Cytoplasmic" evidence="1">
    <location>
        <begin position="328"/>
        <end position="339"/>
    </location>
</feature>
<feature type="transmembrane region" description="Helical; Name=11" evidence="1">
    <location>
        <begin position="340"/>
        <end position="360"/>
    </location>
</feature>
<feature type="topological domain" description="Periplasmic" evidence="1">
    <location>
        <begin position="361"/>
        <end position="369"/>
    </location>
</feature>
<feature type="transmembrane region" description="Helical; Name=12" evidence="1">
    <location>
        <begin position="370"/>
        <end position="390"/>
    </location>
</feature>
<feature type="topological domain" description="Cytoplasmic" evidence="1">
    <location>
        <begin position="391"/>
        <end position="403"/>
    </location>
</feature>
<feature type="mutagenesis site" description="Lack of 3HPP transport activity." evidence="3">
    <original>E</original>
    <variation>A</variation>
    <location>
        <position position="27"/>
    </location>
</feature>
<feature type="mutagenesis site" description="Slight decrease in 3HPP transport activity." evidence="3">
    <original>E</original>
    <variation>D</variation>
    <location>
        <position position="27"/>
    </location>
</feature>
<feature type="mutagenesis site" description="Lack of 3HPP transport activity." evidence="3">
    <original>D</original>
    <variation>A</variation>
    <variation>E</variation>
    <location>
        <position position="75"/>
    </location>
</feature>
<feature type="mutagenesis site" description="30% increase in 3HPP transport activity." evidence="3">
    <original>A</original>
    <variation>H</variation>
    <location>
        <position position="272"/>
    </location>
</feature>
<feature type="mutagenesis site" description="Lack of 3HPP transport activity." evidence="3">
    <original>K</original>
    <variation>D</variation>
    <location>
        <position position="276"/>
    </location>
</feature>
<feature type="sequence conflict" description="In Ref. 5; D85613." evidence="6" ref="5">
    <original>L</original>
    <variation>V</variation>
    <location>
        <position position="295"/>
    </location>
</feature>
<comment type="function">
    <text evidence="3">Uptake of 3-(3-hydroxyphenyl)propionate (3HPP) across the cytoplasmic membrane (PubMed:23934492). Transport is driven by the proton motive force (PubMed:23934492). Does not transport benzoate, 3-hydroxybenzoate or gentisate (PubMed:23934492).</text>
</comment>
<comment type="catalytic activity">
    <reaction evidence="3">
        <text>3-(3-hydroxyphenyl)propanoate(in) + H(+)(in) = 3-(3-hydroxyphenyl)propanoate(out) + H(+)(out)</text>
        <dbReference type="Rhea" id="RHEA:28907"/>
        <dbReference type="ChEBI" id="CHEBI:15378"/>
        <dbReference type="ChEBI" id="CHEBI:57277"/>
    </reaction>
    <physiologicalReaction direction="right-to-left" evidence="3">
        <dbReference type="Rhea" id="RHEA:28909"/>
    </physiologicalReaction>
</comment>
<comment type="activity regulation">
    <text evidence="3">Inhibited by carbonyl cyanide m-chlorophenylhydrazone (CCCP), which dissipates the proton motive force.</text>
</comment>
<comment type="subcellular location">
    <subcellularLocation>
        <location evidence="2 3">Cell inner membrane</location>
        <topology evidence="1">Multi-pass membrane protein</topology>
    </subcellularLocation>
</comment>
<comment type="induction">
    <text evidence="3">Induced by 3HPP.</text>
</comment>
<comment type="disruption phenotype">
    <text evidence="3">Deletion mutant loses the ability to utilize 3HPP at pH 8.2.</text>
</comment>
<comment type="similarity">
    <text evidence="6">Belongs to the major facilitator superfamily. Aromatic acid:H(+) symporter (AAHS) (TC 2.A.1.15) family.</text>
</comment>
<comment type="sequence caution" evidence="6">
    <conflict type="erroneous initiation">
        <sequence resource="EMBL-CDS" id="AAB18077"/>
    </conflict>
    <text>Extended N-terminus.</text>
</comment>
<comment type="sequence caution" evidence="6">
    <conflict type="frameshift">
        <sequence resource="EMBL" id="D85613"/>
    </conflict>
</comment>
<gene>
    <name evidence="4" type="primary">mhpT</name>
    <name evidence="5" type="synonym">orfT</name>
    <name type="synonym">yaiK</name>
    <name type="ordered locus">b0353</name>
    <name type="ordered locus">JW5046</name>
</gene>
<proteinExistence type="evidence at protein level"/>